<accession>Q7Z9M8</accession>
<accession>G0RLY9</accession>
<gene>
    <name evidence="8" type="primary">cel74a</name>
    <name type="ORF">TRIREDRAFT_49081</name>
</gene>
<feature type="signal peptide" evidence="2">
    <location>
        <begin position="1"/>
        <end position="19"/>
    </location>
</feature>
<feature type="chain" id="PRO_0000395871" description="Xyloglucanase" evidence="2">
    <location>
        <begin position="20"/>
        <end position="838"/>
    </location>
</feature>
<feature type="domain" description="CBM1" evidence="3">
    <location>
        <begin position="802"/>
        <end position="838"/>
    </location>
</feature>
<feature type="region of interest" description="Disordered" evidence="4">
    <location>
        <begin position="750"/>
        <end position="801"/>
    </location>
</feature>
<feature type="compositionally biased region" description="Low complexity" evidence="4">
    <location>
        <begin position="754"/>
        <end position="797"/>
    </location>
</feature>
<feature type="active site" description="Nucleophile" evidence="1">
    <location>
        <position position="53"/>
    </location>
</feature>
<feature type="active site" description="Proton donor" evidence="1">
    <location>
        <position position="469"/>
    </location>
</feature>
<feature type="glycosylation site" description="N-linked (GlcNAc...) asparagine" evidence="2">
    <location>
        <position position="232"/>
    </location>
</feature>
<feature type="glycosylation site" description="N-linked (GlcNAc...) asparagine" evidence="2">
    <location>
        <position position="436"/>
    </location>
</feature>
<sequence>MKVSRVLALVLGAVIPAHAAFSWKNVKLGGGGGFVPGIIFHPKTKGVAYARTDIGGLYRLNADDSWTAVTDGIADNAGWHNWGIDAVALDPQDDQKVYAAVGMYTNSWDPSNGAIIRSSDRGATWSFTNLPFKVGGNMPGRGAGERLAVDPANSNIIYFGARSGNGLWKSTDGGVTFSKVSSFTATGTYIPDPSDSNGYNSDKQGLMWVTFDSTSSTTGGATSRIFVGTADNITASVYVSTNAGSTWSAVPGQPGKYFPHKAKLQPAEKALYLTYSDGTGPYDGTLGSVWRYDIAGGTWKDITPVSGSDLYFGFGGLGLDLQKPGTLVVASLNSWWPDAQLFRSTDSGTTWSPIWAWASYPTETYYYSISTPKAPWIKNNFIDVTSESPSDGLIKRLGWMIESLEIDPTDSNHWLYGTGMTIFGGHDLTNWDTRHNVSIQSLADGIEEFSVQDLASAPGGSELLAAVGDDNGFTFASRNDLGTSPQTVWATPTWATSTSVDYAGNSVKSVVRVGNTAGTQQVAISSDGGATWSIDYAADTSMNGGTVAYSADGDTILWSTASSGVQRSQFQGSFASVSSLPAGAVIASDKKTNSVFYAGSGSTFYVSKDTGSSFTRGPKLGSAGTIRDIAAHPTTAGTLYVSTDVGIFRSTDSGTTFGQVSTALTNTYQIALGVGSGSNWNLYAFGTGPSGARLYASGDSGASWTDIQGSQGFGSIDSTKVAGSGSTAGQVYVGTNGRGVFYAQGTVGGGTGGTSSSTKQSSSSTSSASSSTTLRSSVVSTTRASTVTSSRTSSAAGPTGSGVAGHYAQCGGIGWTGPTQCVAPYVCQKQNDYYYQCV</sequence>
<comment type="function">
    <text evidence="5">Hydrolyzes the glucosidic bonds of unbranched Glc residues in tamarind seed xyloglucan, producing XXXG, XLXG, XXLG and XLLG. Has a low activity against beta-glucan and carboxymethylcellulose. Not active against Avicel, laminarin, xylan, galactomannan, linear and branched arabinans, galactan, polygalacturonic acid, starch, beta-D-Glcp, beta-D-cellobiose, beta-D-Galp, beta-D-Xylp, alpha-D-Xylp, alpha-L-Araf and alpha-L-Arap.</text>
</comment>
<comment type="catalytic activity">
    <reaction evidence="5">
        <text>Hydrolysis of (1-&gt;4)-D-glucosidic linkages in xyloglucans so as to successively remove oligosaccharides from the newly-formed chain end after endo-initiation on a polymer molecule.</text>
        <dbReference type="EC" id="3.2.1.155"/>
    </reaction>
</comment>
<comment type="biophysicochemical properties">
    <phDependence>
        <text evidence="5">Optimum pH is 5.3.</text>
    </phDependence>
    <temperatureDependence>
        <text evidence="5">Has a half life of 15 minutes at 60 degrees Celsius.</text>
    </temperatureDependence>
</comment>
<comment type="similarity">
    <text evidence="5">Belongs to the glycosyl hydrolase 74 family.</text>
</comment>
<proteinExistence type="evidence at protein level"/>
<name>XG74_HYPJQ</name>
<keyword id="KW-0119">Carbohydrate metabolism</keyword>
<keyword id="KW-0136">Cellulose degradation</keyword>
<keyword id="KW-0325">Glycoprotein</keyword>
<keyword id="KW-0326">Glycosidase</keyword>
<keyword id="KW-0378">Hydrolase</keyword>
<keyword id="KW-0624">Polysaccharide degradation</keyword>
<keyword id="KW-1185">Reference proteome</keyword>
<keyword id="KW-0732">Signal</keyword>
<organism>
    <name type="scientific">Hypocrea jecorina (strain QM6a)</name>
    <name type="common">Trichoderma reesei</name>
    <dbReference type="NCBI Taxonomy" id="431241"/>
    <lineage>
        <taxon>Eukaryota</taxon>
        <taxon>Fungi</taxon>
        <taxon>Dikarya</taxon>
        <taxon>Ascomycota</taxon>
        <taxon>Pezizomycotina</taxon>
        <taxon>Sordariomycetes</taxon>
        <taxon>Hypocreomycetidae</taxon>
        <taxon>Hypocreales</taxon>
        <taxon>Hypocreaceae</taxon>
        <taxon>Trichoderma</taxon>
    </lineage>
</organism>
<protein>
    <recommendedName>
        <fullName evidence="6">Xyloglucanase</fullName>
        <shortName evidence="6">XG</shortName>
        <ecNumber>3.2.1.155</ecNumber>
    </recommendedName>
    <alternativeName>
        <fullName evidence="8">Cel74a</fullName>
    </alternativeName>
</protein>
<dbReference type="EC" id="3.2.1.155"/>
<dbReference type="EMBL" id="AY281371">
    <property type="protein sequence ID" value="AAP57752.1"/>
    <property type="molecule type" value="mRNA"/>
</dbReference>
<dbReference type="EMBL" id="GL985067">
    <property type="protein sequence ID" value="EGR47596.1"/>
    <property type="molecule type" value="Genomic_DNA"/>
</dbReference>
<dbReference type="RefSeq" id="XP_006966240.1">
    <property type="nucleotide sequence ID" value="XM_006966178.1"/>
</dbReference>
<dbReference type="SMR" id="Q7Z9M8"/>
<dbReference type="STRING" id="431241.Q7Z9M8"/>
<dbReference type="CAZy" id="CBM1">
    <property type="family name" value="Carbohydrate-Binding Module Family 1"/>
</dbReference>
<dbReference type="CAZy" id="GH74">
    <property type="family name" value="Glycoside Hydrolase Family 74"/>
</dbReference>
<dbReference type="GlyCosmos" id="Q7Z9M8">
    <property type="glycosylation" value="2 sites, No reported glycans"/>
</dbReference>
<dbReference type="EnsemblFungi" id="EGR47596">
    <property type="protein sequence ID" value="EGR47596"/>
    <property type="gene ID" value="TRIREDRAFT_49081"/>
</dbReference>
<dbReference type="GeneID" id="18485235"/>
<dbReference type="KEGG" id="tre:TRIREDRAFT_49081"/>
<dbReference type="VEuPathDB" id="FungiDB:TRIREDRAFT_49081"/>
<dbReference type="eggNOG" id="ENOG502QR03">
    <property type="taxonomic scope" value="Eukaryota"/>
</dbReference>
<dbReference type="HOGENOM" id="CLU_004180_1_0_1"/>
<dbReference type="OrthoDB" id="2151161at2759"/>
<dbReference type="BioCyc" id="MetaCyc:MONOMER-16608"/>
<dbReference type="BRENDA" id="3.2.1.155">
    <property type="organism ID" value="6451"/>
</dbReference>
<dbReference type="Proteomes" id="UP000008984">
    <property type="component" value="Unassembled WGS sequence"/>
</dbReference>
<dbReference type="GO" id="GO:0005576">
    <property type="term" value="C:extracellular region"/>
    <property type="evidence" value="ECO:0007669"/>
    <property type="project" value="InterPro"/>
</dbReference>
<dbReference type="GO" id="GO:0030248">
    <property type="term" value="F:cellulose binding"/>
    <property type="evidence" value="ECO:0007669"/>
    <property type="project" value="InterPro"/>
</dbReference>
<dbReference type="GO" id="GO:0033950">
    <property type="term" value="F:xyloglucan-specific exo-beta-1,4-glucanase activity"/>
    <property type="evidence" value="ECO:0007669"/>
    <property type="project" value="UniProtKB-EC"/>
</dbReference>
<dbReference type="GO" id="GO:0030245">
    <property type="term" value="P:cellulose catabolic process"/>
    <property type="evidence" value="ECO:0007669"/>
    <property type="project" value="UniProtKB-KW"/>
</dbReference>
<dbReference type="GO" id="GO:0010411">
    <property type="term" value="P:xyloglucan metabolic process"/>
    <property type="evidence" value="ECO:0007669"/>
    <property type="project" value="TreeGrafter"/>
</dbReference>
<dbReference type="CDD" id="cd15482">
    <property type="entry name" value="Sialidase_non-viral"/>
    <property type="match status" value="1"/>
</dbReference>
<dbReference type="FunFam" id="2.130.10.10:FF:000534">
    <property type="entry name" value="Xyloglucanase Xgh74A"/>
    <property type="match status" value="1"/>
</dbReference>
<dbReference type="Gene3D" id="2.130.10.10">
    <property type="entry name" value="YVTN repeat-like/Quinoprotein amine dehydrogenase"/>
    <property type="match status" value="2"/>
</dbReference>
<dbReference type="InterPro" id="IPR035971">
    <property type="entry name" value="CBD_sf"/>
</dbReference>
<dbReference type="InterPro" id="IPR000254">
    <property type="entry name" value="Cellulose-bd_dom_fun"/>
</dbReference>
<dbReference type="InterPro" id="IPR015943">
    <property type="entry name" value="WD40/YVTN_repeat-like_dom_sf"/>
</dbReference>
<dbReference type="InterPro" id="IPR052025">
    <property type="entry name" value="Xyloglucanase_GH74"/>
</dbReference>
<dbReference type="PANTHER" id="PTHR43739:SF2">
    <property type="entry name" value="OLIGOXYLOGLUCAN-REDUCING END-SPECIFIC XYLOGLUCANASE-RELATED"/>
    <property type="match status" value="1"/>
</dbReference>
<dbReference type="PANTHER" id="PTHR43739">
    <property type="entry name" value="XYLOGLUCANASE (EUROFUNG)"/>
    <property type="match status" value="1"/>
</dbReference>
<dbReference type="Pfam" id="PF00734">
    <property type="entry name" value="CBM_1"/>
    <property type="match status" value="1"/>
</dbReference>
<dbReference type="SMART" id="SM00236">
    <property type="entry name" value="fCBD"/>
    <property type="match status" value="1"/>
</dbReference>
<dbReference type="SUPFAM" id="SSF57180">
    <property type="entry name" value="Cellulose-binding domain"/>
    <property type="match status" value="1"/>
</dbReference>
<dbReference type="SUPFAM" id="SSF110296">
    <property type="entry name" value="Oligoxyloglucan reducing end-specific cellobiohydrolase"/>
    <property type="match status" value="2"/>
</dbReference>
<dbReference type="PROSITE" id="PS00562">
    <property type="entry name" value="CBM1_1"/>
    <property type="match status" value="1"/>
</dbReference>
<dbReference type="PROSITE" id="PS51164">
    <property type="entry name" value="CBM1_2"/>
    <property type="match status" value="1"/>
</dbReference>
<reference evidence="8" key="1">
    <citation type="journal article" date="2003" name="J. Biol. Chem.">
        <title>Transcriptional regulation of biomass-degrading enzymes in the filamentous fungus Trichoderma reesei.</title>
        <authorList>
            <person name="Foreman P.K."/>
            <person name="Brown D."/>
            <person name="Dankmeyer L."/>
            <person name="Dean R."/>
            <person name="Diener S."/>
            <person name="Dunn-Coleman N.S."/>
            <person name="Goedegebuur F."/>
            <person name="Houfek T.D."/>
            <person name="England G.J."/>
            <person name="Kelley A.S."/>
            <person name="Meerman H.J."/>
            <person name="Mitchell T."/>
            <person name="Mitchinson C."/>
            <person name="Olivares H.A."/>
            <person name="Teunissen P.J.M."/>
            <person name="Yao J."/>
            <person name="Ward M."/>
        </authorList>
    </citation>
    <scope>NUCLEOTIDE SEQUENCE [MRNA]</scope>
    <source>
        <strain evidence="8">QM6a</strain>
    </source>
</reference>
<reference key="2">
    <citation type="journal article" date="2008" name="Nat. Biotechnol.">
        <title>Genome sequencing and analysis of the biomass-degrading fungus Trichoderma reesei (syn. Hypocrea jecorina).</title>
        <authorList>
            <person name="Martinez D."/>
            <person name="Berka R.M."/>
            <person name="Henrissat B."/>
            <person name="Saloheimo M."/>
            <person name="Arvas M."/>
            <person name="Baker S.E."/>
            <person name="Chapman J."/>
            <person name="Chertkov O."/>
            <person name="Coutinho P.M."/>
            <person name="Cullen D."/>
            <person name="Danchin E.G."/>
            <person name="Grigoriev I.V."/>
            <person name="Harris P."/>
            <person name="Jackson M."/>
            <person name="Kubicek C.P."/>
            <person name="Han C.S."/>
            <person name="Ho I."/>
            <person name="Larrondo L.F."/>
            <person name="de Leon A.L."/>
            <person name="Magnuson J.K."/>
            <person name="Merino S."/>
            <person name="Misra M."/>
            <person name="Nelson B."/>
            <person name="Putnam N."/>
            <person name="Robbertse B."/>
            <person name="Salamov A.A."/>
            <person name="Schmoll M."/>
            <person name="Terry A."/>
            <person name="Thayer N."/>
            <person name="Westerholm-Parvinen A."/>
            <person name="Schoch C.L."/>
            <person name="Yao J."/>
            <person name="Barabote R."/>
            <person name="Nelson M.A."/>
            <person name="Detter C."/>
            <person name="Bruce D."/>
            <person name="Kuske C.R."/>
            <person name="Xie G."/>
            <person name="Richardson P."/>
            <person name="Rokhsar D.S."/>
            <person name="Lucas S.M."/>
            <person name="Rubin E.M."/>
            <person name="Dunn-Coleman N."/>
            <person name="Ward M."/>
            <person name="Brettin T.S."/>
        </authorList>
    </citation>
    <scope>NUCLEOTIDE SEQUENCE [LARGE SCALE GENOMIC DNA]</scope>
    <source>
        <strain>QM6a</strain>
    </source>
</reference>
<reference evidence="7" key="3">
    <citation type="journal article" date="2004" name="Biochim. Biophys. Acta">
        <title>Specific xyloglucanases as a new class of polysaccharide-degrading enzymes.</title>
        <authorList>
            <person name="Grishutin S.G."/>
            <person name="Gusakov A.V."/>
            <person name="Markov A.V."/>
            <person name="Ustinov B.B."/>
            <person name="Semenova M.V."/>
            <person name="Sinitsyn A.P."/>
        </authorList>
    </citation>
    <scope>IDENTIFICATION BY MASS SPECTROMETRY</scope>
    <scope>FUNCTION</scope>
    <scope>CATALYTIC ACTIVITY</scope>
    <scope>BIOPHYSICOCHEMICAL PROPERTIES</scope>
</reference>
<evidence type="ECO:0000250" key="1">
    <source>
        <dbReference type="UniProtKB" id="Q70DK5"/>
    </source>
</evidence>
<evidence type="ECO:0000255" key="2"/>
<evidence type="ECO:0000255" key="3">
    <source>
        <dbReference type="PROSITE-ProRule" id="PRU00597"/>
    </source>
</evidence>
<evidence type="ECO:0000256" key="4">
    <source>
        <dbReference type="SAM" id="MobiDB-lite"/>
    </source>
</evidence>
<evidence type="ECO:0000269" key="5">
    <source>
    </source>
</evidence>
<evidence type="ECO:0000303" key="6">
    <source>
    </source>
</evidence>
<evidence type="ECO:0000305" key="7"/>
<evidence type="ECO:0000312" key="8">
    <source>
        <dbReference type="EMBL" id="AAP57752.1"/>
    </source>
</evidence>